<sequence length="250" mass="27812">MTSSSSDRSPLASQLGEVPAPLYARVKQMIVSQIQSGAWPPHHRVPSESELVSQLGFSRMTINRALRELTSDGLLVRMQGVGTFVAEPKGQSALFEVHNIADEIAARGHRHRCQVITLGEEVAGPERALALDVREGQRVFHSLIVHYENDIPVQIEDRYVNAAVAPDYLKQDFTRQTPYAYLTQVAPLTEGEHVVEAILAEPAECKLLQIERGEPCLLIRRRTWSGRVAVTAARLLHPGSRHRLEGRFSS</sequence>
<keyword id="KW-0238">DNA-binding</keyword>
<keyword id="KW-0369">Histidine metabolism</keyword>
<keyword id="KW-1185">Reference proteome</keyword>
<keyword id="KW-0678">Repressor</keyword>
<keyword id="KW-0804">Transcription</keyword>
<keyword id="KW-0805">Transcription regulation</keyword>
<evidence type="ECO:0000250" key="1"/>
<evidence type="ECO:0000255" key="2">
    <source>
        <dbReference type="PROSITE-ProRule" id="PRU00307"/>
    </source>
</evidence>
<gene>
    <name type="primary">hutC</name>
    <name type="ordered locus">PA5105</name>
</gene>
<name>HUTC_PSEAE</name>
<reference key="1">
    <citation type="journal article" date="2000" name="Nature">
        <title>Complete genome sequence of Pseudomonas aeruginosa PAO1, an opportunistic pathogen.</title>
        <authorList>
            <person name="Stover C.K."/>
            <person name="Pham X.-Q.T."/>
            <person name="Erwin A.L."/>
            <person name="Mizoguchi S.D."/>
            <person name="Warrener P."/>
            <person name="Hickey M.J."/>
            <person name="Brinkman F.S.L."/>
            <person name="Hufnagle W.O."/>
            <person name="Kowalik D.J."/>
            <person name="Lagrou M."/>
            <person name="Garber R.L."/>
            <person name="Goltry L."/>
            <person name="Tolentino E."/>
            <person name="Westbrock-Wadman S."/>
            <person name="Yuan Y."/>
            <person name="Brody L.L."/>
            <person name="Coulter S.N."/>
            <person name="Folger K.R."/>
            <person name="Kas A."/>
            <person name="Larbig K."/>
            <person name="Lim R.M."/>
            <person name="Smith K.A."/>
            <person name="Spencer D.H."/>
            <person name="Wong G.K.-S."/>
            <person name="Wu Z."/>
            <person name="Paulsen I.T."/>
            <person name="Reizer J."/>
            <person name="Saier M.H. Jr."/>
            <person name="Hancock R.E.W."/>
            <person name="Lory S."/>
            <person name="Olson M.V."/>
        </authorList>
    </citation>
    <scope>NUCLEOTIDE SEQUENCE [LARGE SCALE GENOMIC DNA]</scope>
    <source>
        <strain>ATCC 15692 / DSM 22644 / CIP 104116 / JCM 14847 / LMG 12228 / 1C / PRS 101 / PAO1</strain>
    </source>
</reference>
<accession>Q9HU78</accession>
<comment type="function">
    <text evidence="1">Repressor which binds to the hutP region in the histidine utilization (hut) operon. It blocks the expression of all the hut genes in the absence of inducer (By similarity).</text>
</comment>
<comment type="pathway">
    <text>Amino-acid degradation; L-histidine degradation into L-glutamate [regulation].</text>
</comment>
<protein>
    <recommendedName>
        <fullName>Histidine utilization repressor</fullName>
    </recommendedName>
</protein>
<feature type="chain" id="PRO_0000287777" description="Histidine utilization repressor">
    <location>
        <begin position="1"/>
        <end position="250"/>
    </location>
</feature>
<feature type="domain" description="HTH gntR-type" evidence="2">
    <location>
        <begin position="20"/>
        <end position="88"/>
    </location>
</feature>
<feature type="DNA-binding region" description="H-T-H motif" evidence="2">
    <location>
        <begin position="48"/>
        <end position="67"/>
    </location>
</feature>
<proteinExistence type="inferred from homology"/>
<organism>
    <name type="scientific">Pseudomonas aeruginosa (strain ATCC 15692 / DSM 22644 / CIP 104116 / JCM 14847 / LMG 12228 / 1C / PRS 101 / PAO1)</name>
    <dbReference type="NCBI Taxonomy" id="208964"/>
    <lineage>
        <taxon>Bacteria</taxon>
        <taxon>Pseudomonadati</taxon>
        <taxon>Pseudomonadota</taxon>
        <taxon>Gammaproteobacteria</taxon>
        <taxon>Pseudomonadales</taxon>
        <taxon>Pseudomonadaceae</taxon>
        <taxon>Pseudomonas</taxon>
    </lineage>
</organism>
<dbReference type="EMBL" id="AE004091">
    <property type="protein sequence ID" value="AAG08490.1"/>
    <property type="molecule type" value="Genomic_DNA"/>
</dbReference>
<dbReference type="PIR" id="B83008">
    <property type="entry name" value="B83008"/>
</dbReference>
<dbReference type="RefSeq" id="NP_253792.1">
    <property type="nucleotide sequence ID" value="NC_002516.2"/>
</dbReference>
<dbReference type="RefSeq" id="WP_003095970.1">
    <property type="nucleotide sequence ID" value="NZ_QZGE01000002.1"/>
</dbReference>
<dbReference type="SMR" id="Q9HU78"/>
<dbReference type="STRING" id="208964.PA5105"/>
<dbReference type="PaxDb" id="208964-PA5105"/>
<dbReference type="DNASU" id="883034"/>
<dbReference type="GeneID" id="883034"/>
<dbReference type="KEGG" id="pae:PA5105"/>
<dbReference type="PATRIC" id="fig|208964.12.peg.5350"/>
<dbReference type="PseudoCAP" id="PA5105"/>
<dbReference type="HOGENOM" id="CLU_063236_0_0_6"/>
<dbReference type="InParanoid" id="Q9HU78"/>
<dbReference type="OrthoDB" id="9808698at2"/>
<dbReference type="PhylomeDB" id="Q9HU78"/>
<dbReference type="BioCyc" id="PAER208964:G1FZ6-5220-MONOMER"/>
<dbReference type="UniPathway" id="UPA00379"/>
<dbReference type="Proteomes" id="UP000002438">
    <property type="component" value="Chromosome"/>
</dbReference>
<dbReference type="GO" id="GO:0003677">
    <property type="term" value="F:DNA binding"/>
    <property type="evidence" value="ECO:0007669"/>
    <property type="project" value="UniProtKB-KW"/>
</dbReference>
<dbReference type="GO" id="GO:0003700">
    <property type="term" value="F:DNA-binding transcription factor activity"/>
    <property type="evidence" value="ECO:0007669"/>
    <property type="project" value="InterPro"/>
</dbReference>
<dbReference type="GO" id="GO:0019556">
    <property type="term" value="P:L-histidine catabolic process to glutamate and formamide"/>
    <property type="evidence" value="ECO:0007669"/>
    <property type="project" value="UniProtKB-UniPathway"/>
</dbReference>
<dbReference type="GO" id="GO:0019557">
    <property type="term" value="P:L-histidine catabolic process to glutamate and formate"/>
    <property type="evidence" value="ECO:0007669"/>
    <property type="project" value="UniProtKB-UniPathway"/>
</dbReference>
<dbReference type="GO" id="GO:0045892">
    <property type="term" value="P:negative regulation of DNA-templated transcription"/>
    <property type="evidence" value="ECO:0007669"/>
    <property type="project" value="InterPro"/>
</dbReference>
<dbReference type="CDD" id="cd07377">
    <property type="entry name" value="WHTH_GntR"/>
    <property type="match status" value="1"/>
</dbReference>
<dbReference type="FunFam" id="1.10.10.10:FF:000079">
    <property type="entry name" value="GntR family transcriptional regulator"/>
    <property type="match status" value="1"/>
</dbReference>
<dbReference type="FunFam" id="3.40.1410.10:FF:000004">
    <property type="entry name" value="Histidine utilization repressor"/>
    <property type="match status" value="1"/>
</dbReference>
<dbReference type="Gene3D" id="3.40.1410.10">
    <property type="entry name" value="Chorismate lyase-like"/>
    <property type="match status" value="1"/>
</dbReference>
<dbReference type="Gene3D" id="1.10.10.10">
    <property type="entry name" value="Winged helix-like DNA-binding domain superfamily/Winged helix DNA-binding domain"/>
    <property type="match status" value="1"/>
</dbReference>
<dbReference type="InterPro" id="IPR050679">
    <property type="entry name" value="Bact_HTH_transcr_reg"/>
</dbReference>
<dbReference type="InterPro" id="IPR028978">
    <property type="entry name" value="Chorismate_lyase_/UTRA_dom_sf"/>
</dbReference>
<dbReference type="InterPro" id="IPR010248">
    <property type="entry name" value="His_ut_repres"/>
</dbReference>
<dbReference type="InterPro" id="IPR000524">
    <property type="entry name" value="Tscrpt_reg_HTH_GntR"/>
</dbReference>
<dbReference type="InterPro" id="IPR011663">
    <property type="entry name" value="UTRA"/>
</dbReference>
<dbReference type="InterPro" id="IPR036388">
    <property type="entry name" value="WH-like_DNA-bd_sf"/>
</dbReference>
<dbReference type="InterPro" id="IPR036390">
    <property type="entry name" value="WH_DNA-bd_sf"/>
</dbReference>
<dbReference type="NCBIfam" id="TIGR02018">
    <property type="entry name" value="his_ut_repres"/>
    <property type="match status" value="1"/>
</dbReference>
<dbReference type="PANTHER" id="PTHR44846">
    <property type="entry name" value="MANNOSYL-D-GLYCERATE TRANSPORT/METABOLISM SYSTEM REPRESSOR MNGR-RELATED"/>
    <property type="match status" value="1"/>
</dbReference>
<dbReference type="PANTHER" id="PTHR44846:SF16">
    <property type="entry name" value="TRANSCRIPTIONAL REGULATOR PHNF-RELATED"/>
    <property type="match status" value="1"/>
</dbReference>
<dbReference type="Pfam" id="PF00392">
    <property type="entry name" value="GntR"/>
    <property type="match status" value="1"/>
</dbReference>
<dbReference type="Pfam" id="PF07702">
    <property type="entry name" value="UTRA"/>
    <property type="match status" value="1"/>
</dbReference>
<dbReference type="PRINTS" id="PR00035">
    <property type="entry name" value="HTHGNTR"/>
</dbReference>
<dbReference type="SMART" id="SM00345">
    <property type="entry name" value="HTH_GNTR"/>
    <property type="match status" value="1"/>
</dbReference>
<dbReference type="SMART" id="SM00866">
    <property type="entry name" value="UTRA"/>
    <property type="match status" value="1"/>
</dbReference>
<dbReference type="SUPFAM" id="SSF64288">
    <property type="entry name" value="Chorismate lyase-like"/>
    <property type="match status" value="1"/>
</dbReference>
<dbReference type="SUPFAM" id="SSF46785">
    <property type="entry name" value="Winged helix' DNA-binding domain"/>
    <property type="match status" value="1"/>
</dbReference>
<dbReference type="PROSITE" id="PS50949">
    <property type="entry name" value="HTH_GNTR"/>
    <property type="match status" value="1"/>
</dbReference>